<name>EIF3H_ASPFU</name>
<gene>
    <name type="ORF">AFUA_1G09970</name>
</gene>
<evidence type="ECO:0000255" key="1">
    <source>
        <dbReference type="HAMAP-Rule" id="MF_03007"/>
    </source>
</evidence>
<evidence type="ECO:0000255" key="2">
    <source>
        <dbReference type="PROSITE-ProRule" id="PRU01182"/>
    </source>
</evidence>
<sequence>MAENETPLTAVKVEALVVMKIMKHCSQTFPTTATGSIVGMDVGGTLEITNSFPFPVVEVPPESHFDNAAANPAAAAPRAKANTVYQAEMIRMLREVNVDANNVGWYTSANMGNFVNMNVIENQFFYQKEMNERTVALVHDVSRSSQGSLSLRAFRLSPKFMTAFKENKFTSEELQKSGLRYQDIFVELPVEIHNSHLITSFIHQLQTPNIPAPTELPSSLAALESGPFVKSSILAPNFDNLALSIDPFLEKNCDLLLDSIETHHTETNNFQYYQRSLAREQQRISAWQQKRKQENATRAALKQPLLPEDEWQRLFKLPQEPSRLESMLNSRQVDQYARQIDSFVSSTTGKMFAVKGNLLPGETAK</sequence>
<proteinExistence type="inferred from homology"/>
<comment type="function">
    <text evidence="1">Component of the eukaryotic translation initiation factor 3 (eIF-3) complex, which is involved in protein synthesis of a specialized repertoire of mRNAs and, together with other initiation factors, stimulates binding of mRNA and methionyl-tRNAi to the 40S ribosome. The eIF-3 complex specifically targets and initiates translation of a subset of mRNAs involved in cell proliferation.</text>
</comment>
<comment type="subunit">
    <text evidence="1">Component of the eukaryotic translation initiation factor 3 (eIF-3) complex.</text>
</comment>
<comment type="subcellular location">
    <subcellularLocation>
        <location evidence="1">Cytoplasm</location>
    </subcellularLocation>
</comment>
<comment type="similarity">
    <text evidence="1">Belongs to the eIF-3 subunit H family.</text>
</comment>
<organism>
    <name type="scientific">Aspergillus fumigatus (strain ATCC MYA-4609 / CBS 101355 / FGSC A1100 / Af293)</name>
    <name type="common">Neosartorya fumigata</name>
    <dbReference type="NCBI Taxonomy" id="330879"/>
    <lineage>
        <taxon>Eukaryota</taxon>
        <taxon>Fungi</taxon>
        <taxon>Dikarya</taxon>
        <taxon>Ascomycota</taxon>
        <taxon>Pezizomycotina</taxon>
        <taxon>Eurotiomycetes</taxon>
        <taxon>Eurotiomycetidae</taxon>
        <taxon>Eurotiales</taxon>
        <taxon>Aspergillaceae</taxon>
        <taxon>Aspergillus</taxon>
        <taxon>Aspergillus subgen. Fumigati</taxon>
    </lineage>
</organism>
<keyword id="KW-0963">Cytoplasm</keyword>
<keyword id="KW-0396">Initiation factor</keyword>
<keyword id="KW-0648">Protein biosynthesis</keyword>
<keyword id="KW-1185">Reference proteome</keyword>
<dbReference type="EMBL" id="AAHF01000004">
    <property type="protein sequence ID" value="EAL90326.1"/>
    <property type="molecule type" value="Genomic_DNA"/>
</dbReference>
<dbReference type="RefSeq" id="XP_752364.1">
    <property type="nucleotide sequence ID" value="XM_747271.1"/>
</dbReference>
<dbReference type="SMR" id="Q4WTA6"/>
<dbReference type="STRING" id="330879.Q4WTA6"/>
<dbReference type="EnsemblFungi" id="EAL90326">
    <property type="protein sequence ID" value="EAL90326"/>
    <property type="gene ID" value="AFUA_1G09970"/>
</dbReference>
<dbReference type="GeneID" id="3510586"/>
<dbReference type="KEGG" id="afm:AFUA_1G09970"/>
<dbReference type="VEuPathDB" id="FungiDB:Afu1g09970"/>
<dbReference type="eggNOG" id="KOG1560">
    <property type="taxonomic scope" value="Eukaryota"/>
</dbReference>
<dbReference type="HOGENOM" id="CLU_044094_1_0_1"/>
<dbReference type="InParanoid" id="Q4WTA6"/>
<dbReference type="OMA" id="WYQSTYF"/>
<dbReference type="OrthoDB" id="10265695at2759"/>
<dbReference type="Proteomes" id="UP000002530">
    <property type="component" value="Chromosome 1"/>
</dbReference>
<dbReference type="GO" id="GO:0016282">
    <property type="term" value="C:eukaryotic 43S preinitiation complex"/>
    <property type="evidence" value="ECO:0000318"/>
    <property type="project" value="GO_Central"/>
</dbReference>
<dbReference type="GO" id="GO:0033290">
    <property type="term" value="C:eukaryotic 48S preinitiation complex"/>
    <property type="evidence" value="ECO:0007669"/>
    <property type="project" value="UniProtKB-UniRule"/>
</dbReference>
<dbReference type="GO" id="GO:0005852">
    <property type="term" value="C:eukaryotic translation initiation factor 3 complex"/>
    <property type="evidence" value="ECO:0000318"/>
    <property type="project" value="GO_Central"/>
</dbReference>
<dbReference type="GO" id="GO:0008237">
    <property type="term" value="F:metallopeptidase activity"/>
    <property type="evidence" value="ECO:0000318"/>
    <property type="project" value="GO_Central"/>
</dbReference>
<dbReference type="GO" id="GO:0003743">
    <property type="term" value="F:translation initiation factor activity"/>
    <property type="evidence" value="ECO:0007669"/>
    <property type="project" value="UniProtKB-UniRule"/>
</dbReference>
<dbReference type="GO" id="GO:0001732">
    <property type="term" value="P:formation of cytoplasmic translation initiation complex"/>
    <property type="evidence" value="ECO:0007669"/>
    <property type="project" value="UniProtKB-UniRule"/>
</dbReference>
<dbReference type="GO" id="GO:0006413">
    <property type="term" value="P:translational initiation"/>
    <property type="evidence" value="ECO:0000318"/>
    <property type="project" value="GO_Central"/>
</dbReference>
<dbReference type="CDD" id="cd08065">
    <property type="entry name" value="MPN_eIF3h"/>
    <property type="match status" value="1"/>
</dbReference>
<dbReference type="FunFam" id="3.40.140.10:FF:000052">
    <property type="entry name" value="Eukaryotic translation initiation factor 3 subunit H"/>
    <property type="match status" value="1"/>
</dbReference>
<dbReference type="Gene3D" id="3.40.140.10">
    <property type="entry name" value="Cytidine Deaminase, domain 2"/>
    <property type="match status" value="1"/>
</dbReference>
<dbReference type="HAMAP" id="MF_03007">
    <property type="entry name" value="eIF3h"/>
    <property type="match status" value="1"/>
</dbReference>
<dbReference type="InterPro" id="IPR027524">
    <property type="entry name" value="eIF3h"/>
</dbReference>
<dbReference type="InterPro" id="IPR045810">
    <property type="entry name" value="eIF3h_C"/>
</dbReference>
<dbReference type="InterPro" id="IPR000555">
    <property type="entry name" value="JAMM/MPN+_dom"/>
</dbReference>
<dbReference type="InterPro" id="IPR050242">
    <property type="entry name" value="JAMM_MPN+_peptidase_M67A"/>
</dbReference>
<dbReference type="InterPro" id="IPR037518">
    <property type="entry name" value="MPN"/>
</dbReference>
<dbReference type="PANTHER" id="PTHR10410">
    <property type="entry name" value="EUKARYOTIC TRANSLATION INITIATION FACTOR 3 -RELATED"/>
    <property type="match status" value="1"/>
</dbReference>
<dbReference type="Pfam" id="PF19445">
    <property type="entry name" value="eIF3h_C"/>
    <property type="match status" value="2"/>
</dbReference>
<dbReference type="Pfam" id="PF01398">
    <property type="entry name" value="JAB"/>
    <property type="match status" value="1"/>
</dbReference>
<dbReference type="SMART" id="SM00232">
    <property type="entry name" value="JAB_MPN"/>
    <property type="match status" value="1"/>
</dbReference>
<dbReference type="PROSITE" id="PS50249">
    <property type="entry name" value="MPN"/>
    <property type="match status" value="1"/>
</dbReference>
<protein>
    <recommendedName>
        <fullName evidence="1">Eukaryotic translation initiation factor 3 subunit H</fullName>
        <shortName evidence="1">eIF3h</shortName>
    </recommendedName>
</protein>
<feature type="chain" id="PRO_0000365200" description="Eukaryotic translation initiation factor 3 subunit H">
    <location>
        <begin position="1"/>
        <end position="365"/>
    </location>
</feature>
<feature type="domain" description="MPN" evidence="2">
    <location>
        <begin position="11"/>
        <end position="160"/>
    </location>
</feature>
<reference key="1">
    <citation type="journal article" date="2005" name="Nature">
        <title>Genomic sequence of the pathogenic and allergenic filamentous fungus Aspergillus fumigatus.</title>
        <authorList>
            <person name="Nierman W.C."/>
            <person name="Pain A."/>
            <person name="Anderson M.J."/>
            <person name="Wortman J.R."/>
            <person name="Kim H.S."/>
            <person name="Arroyo J."/>
            <person name="Berriman M."/>
            <person name="Abe K."/>
            <person name="Archer D.B."/>
            <person name="Bermejo C."/>
            <person name="Bennett J.W."/>
            <person name="Bowyer P."/>
            <person name="Chen D."/>
            <person name="Collins M."/>
            <person name="Coulsen R."/>
            <person name="Davies R."/>
            <person name="Dyer P.S."/>
            <person name="Farman M.L."/>
            <person name="Fedorova N."/>
            <person name="Fedorova N.D."/>
            <person name="Feldblyum T.V."/>
            <person name="Fischer R."/>
            <person name="Fosker N."/>
            <person name="Fraser A."/>
            <person name="Garcia J.L."/>
            <person name="Garcia M.J."/>
            <person name="Goble A."/>
            <person name="Goldman G.H."/>
            <person name="Gomi K."/>
            <person name="Griffith-Jones S."/>
            <person name="Gwilliam R."/>
            <person name="Haas B.J."/>
            <person name="Haas H."/>
            <person name="Harris D.E."/>
            <person name="Horiuchi H."/>
            <person name="Huang J."/>
            <person name="Humphray S."/>
            <person name="Jimenez J."/>
            <person name="Keller N."/>
            <person name="Khouri H."/>
            <person name="Kitamoto K."/>
            <person name="Kobayashi T."/>
            <person name="Konzack S."/>
            <person name="Kulkarni R."/>
            <person name="Kumagai T."/>
            <person name="Lafton A."/>
            <person name="Latge J.-P."/>
            <person name="Li W."/>
            <person name="Lord A."/>
            <person name="Lu C."/>
            <person name="Majoros W.H."/>
            <person name="May G.S."/>
            <person name="Miller B.L."/>
            <person name="Mohamoud Y."/>
            <person name="Molina M."/>
            <person name="Monod M."/>
            <person name="Mouyna I."/>
            <person name="Mulligan S."/>
            <person name="Murphy L.D."/>
            <person name="O'Neil S."/>
            <person name="Paulsen I."/>
            <person name="Penalva M.A."/>
            <person name="Pertea M."/>
            <person name="Price C."/>
            <person name="Pritchard B.L."/>
            <person name="Quail M.A."/>
            <person name="Rabbinowitsch E."/>
            <person name="Rawlins N."/>
            <person name="Rajandream M.A."/>
            <person name="Reichard U."/>
            <person name="Renauld H."/>
            <person name="Robson G.D."/>
            <person name="Rodriguez de Cordoba S."/>
            <person name="Rodriguez-Pena J.M."/>
            <person name="Ronning C.M."/>
            <person name="Rutter S."/>
            <person name="Salzberg S.L."/>
            <person name="Sanchez M."/>
            <person name="Sanchez-Ferrero J.C."/>
            <person name="Saunders D."/>
            <person name="Seeger K."/>
            <person name="Squares R."/>
            <person name="Squares S."/>
            <person name="Takeuchi M."/>
            <person name="Tekaia F."/>
            <person name="Turner G."/>
            <person name="Vazquez de Aldana C.R."/>
            <person name="Weidman J."/>
            <person name="White O."/>
            <person name="Woodward J.R."/>
            <person name="Yu J.-H."/>
            <person name="Fraser C.M."/>
            <person name="Galagan J.E."/>
            <person name="Asai K."/>
            <person name="Machida M."/>
            <person name="Hall N."/>
            <person name="Barrell B.G."/>
            <person name="Denning D.W."/>
        </authorList>
    </citation>
    <scope>NUCLEOTIDE SEQUENCE [LARGE SCALE GENOMIC DNA]</scope>
    <source>
        <strain>ATCC MYA-4609 / CBS 101355 / FGSC A1100 / Af293</strain>
    </source>
</reference>
<accession>Q4WTA6</accession>